<accession>Q38XT6</accession>
<name>FMT_LATSS</name>
<protein>
    <recommendedName>
        <fullName evidence="1">Methionyl-tRNA formyltransferase</fullName>
        <ecNumber evidence="1">2.1.2.9</ecNumber>
    </recommendedName>
</protein>
<reference key="1">
    <citation type="journal article" date="2005" name="Nat. Biotechnol.">
        <title>The complete genome sequence of the meat-borne lactic acid bacterium Lactobacillus sakei 23K.</title>
        <authorList>
            <person name="Chaillou S."/>
            <person name="Champomier-Verges M.-C."/>
            <person name="Cornet M."/>
            <person name="Crutz-Le Coq A.-M."/>
            <person name="Dudez A.-M."/>
            <person name="Martin V."/>
            <person name="Beaufils S."/>
            <person name="Darbon-Rongere E."/>
            <person name="Bossy R."/>
            <person name="Loux V."/>
            <person name="Zagorec M."/>
        </authorList>
    </citation>
    <scope>NUCLEOTIDE SEQUENCE [LARGE SCALE GENOMIC DNA]</scope>
    <source>
        <strain>23K</strain>
    </source>
</reference>
<comment type="function">
    <text evidence="1">Attaches a formyl group to the free amino group of methionyl-tRNA(fMet). The formyl group appears to play a dual role in the initiator identity of N-formylmethionyl-tRNA by promoting its recognition by IF2 and preventing the misappropriation of this tRNA by the elongation apparatus.</text>
</comment>
<comment type="catalytic activity">
    <reaction evidence="1">
        <text>L-methionyl-tRNA(fMet) + (6R)-10-formyltetrahydrofolate = N-formyl-L-methionyl-tRNA(fMet) + (6S)-5,6,7,8-tetrahydrofolate + H(+)</text>
        <dbReference type="Rhea" id="RHEA:24380"/>
        <dbReference type="Rhea" id="RHEA-COMP:9952"/>
        <dbReference type="Rhea" id="RHEA-COMP:9953"/>
        <dbReference type="ChEBI" id="CHEBI:15378"/>
        <dbReference type="ChEBI" id="CHEBI:57453"/>
        <dbReference type="ChEBI" id="CHEBI:78530"/>
        <dbReference type="ChEBI" id="CHEBI:78844"/>
        <dbReference type="ChEBI" id="CHEBI:195366"/>
        <dbReference type="EC" id="2.1.2.9"/>
    </reaction>
</comment>
<comment type="similarity">
    <text evidence="1">Belongs to the Fmt family.</text>
</comment>
<dbReference type="EC" id="2.1.2.9" evidence="1"/>
<dbReference type="EMBL" id="CR936503">
    <property type="protein sequence ID" value="CAI54993.1"/>
    <property type="molecule type" value="Genomic_DNA"/>
</dbReference>
<dbReference type="RefSeq" id="WP_011374398.1">
    <property type="nucleotide sequence ID" value="NC_007576.1"/>
</dbReference>
<dbReference type="SMR" id="Q38XT6"/>
<dbReference type="STRING" id="314315.LCA_0689"/>
<dbReference type="KEGG" id="lsa:LCA_0689"/>
<dbReference type="eggNOG" id="COG0223">
    <property type="taxonomic scope" value="Bacteria"/>
</dbReference>
<dbReference type="HOGENOM" id="CLU_033347_1_1_9"/>
<dbReference type="OrthoDB" id="9802815at2"/>
<dbReference type="Proteomes" id="UP000002707">
    <property type="component" value="Chromosome"/>
</dbReference>
<dbReference type="GO" id="GO:0005829">
    <property type="term" value="C:cytosol"/>
    <property type="evidence" value="ECO:0007669"/>
    <property type="project" value="TreeGrafter"/>
</dbReference>
<dbReference type="GO" id="GO:0004479">
    <property type="term" value="F:methionyl-tRNA formyltransferase activity"/>
    <property type="evidence" value="ECO:0007669"/>
    <property type="project" value="UniProtKB-UniRule"/>
</dbReference>
<dbReference type="CDD" id="cd08646">
    <property type="entry name" value="FMT_core_Met-tRNA-FMT_N"/>
    <property type="match status" value="1"/>
</dbReference>
<dbReference type="CDD" id="cd08704">
    <property type="entry name" value="Met_tRNA_FMT_C"/>
    <property type="match status" value="1"/>
</dbReference>
<dbReference type="FunFam" id="3.40.50.170:FF:000004">
    <property type="entry name" value="Methionyl-tRNA formyltransferase"/>
    <property type="match status" value="1"/>
</dbReference>
<dbReference type="Gene3D" id="3.10.25.10">
    <property type="entry name" value="Formyl transferase, C-terminal domain"/>
    <property type="match status" value="1"/>
</dbReference>
<dbReference type="Gene3D" id="3.40.50.170">
    <property type="entry name" value="Formyl transferase, N-terminal domain"/>
    <property type="match status" value="1"/>
</dbReference>
<dbReference type="HAMAP" id="MF_00182">
    <property type="entry name" value="Formyl_trans"/>
    <property type="match status" value="1"/>
</dbReference>
<dbReference type="InterPro" id="IPR005794">
    <property type="entry name" value="Fmt"/>
</dbReference>
<dbReference type="InterPro" id="IPR005793">
    <property type="entry name" value="Formyl_trans_C"/>
</dbReference>
<dbReference type="InterPro" id="IPR037022">
    <property type="entry name" value="Formyl_trans_C_sf"/>
</dbReference>
<dbReference type="InterPro" id="IPR002376">
    <property type="entry name" value="Formyl_transf_N"/>
</dbReference>
<dbReference type="InterPro" id="IPR036477">
    <property type="entry name" value="Formyl_transf_N_sf"/>
</dbReference>
<dbReference type="InterPro" id="IPR011034">
    <property type="entry name" value="Formyl_transferase-like_C_sf"/>
</dbReference>
<dbReference type="InterPro" id="IPR044135">
    <property type="entry name" value="Met-tRNA-FMT_C"/>
</dbReference>
<dbReference type="InterPro" id="IPR041711">
    <property type="entry name" value="Met-tRNA-FMT_N"/>
</dbReference>
<dbReference type="NCBIfam" id="TIGR00460">
    <property type="entry name" value="fmt"/>
    <property type="match status" value="1"/>
</dbReference>
<dbReference type="PANTHER" id="PTHR11138">
    <property type="entry name" value="METHIONYL-TRNA FORMYLTRANSFERASE"/>
    <property type="match status" value="1"/>
</dbReference>
<dbReference type="PANTHER" id="PTHR11138:SF5">
    <property type="entry name" value="METHIONYL-TRNA FORMYLTRANSFERASE, MITOCHONDRIAL"/>
    <property type="match status" value="1"/>
</dbReference>
<dbReference type="Pfam" id="PF02911">
    <property type="entry name" value="Formyl_trans_C"/>
    <property type="match status" value="1"/>
</dbReference>
<dbReference type="Pfam" id="PF00551">
    <property type="entry name" value="Formyl_trans_N"/>
    <property type="match status" value="1"/>
</dbReference>
<dbReference type="SUPFAM" id="SSF50486">
    <property type="entry name" value="FMT C-terminal domain-like"/>
    <property type="match status" value="1"/>
</dbReference>
<dbReference type="SUPFAM" id="SSF53328">
    <property type="entry name" value="Formyltransferase"/>
    <property type="match status" value="1"/>
</dbReference>
<feature type="chain" id="PRO_1000020090" description="Methionyl-tRNA formyltransferase">
    <location>
        <begin position="1"/>
        <end position="318"/>
    </location>
</feature>
<feature type="binding site" evidence="1">
    <location>
        <begin position="110"/>
        <end position="113"/>
    </location>
    <ligand>
        <name>(6S)-5,6,7,8-tetrahydrofolate</name>
        <dbReference type="ChEBI" id="CHEBI:57453"/>
    </ligand>
</feature>
<proteinExistence type="inferred from homology"/>
<keyword id="KW-0648">Protein biosynthesis</keyword>
<keyword id="KW-1185">Reference proteome</keyword>
<keyword id="KW-0808">Transferase</keyword>
<gene>
    <name evidence="1" type="primary">fmt</name>
    <name type="ordered locus">LCA_0689</name>
</gene>
<evidence type="ECO:0000255" key="1">
    <source>
        <dbReference type="HAMAP-Rule" id="MF_00182"/>
    </source>
</evidence>
<organism>
    <name type="scientific">Latilactobacillus sakei subsp. sakei (strain 23K)</name>
    <name type="common">Lactobacillus sakei subsp. sakei</name>
    <dbReference type="NCBI Taxonomy" id="314315"/>
    <lineage>
        <taxon>Bacteria</taxon>
        <taxon>Bacillati</taxon>
        <taxon>Bacillota</taxon>
        <taxon>Bacilli</taxon>
        <taxon>Lactobacillales</taxon>
        <taxon>Lactobacillaceae</taxon>
        <taxon>Latilactobacillus</taxon>
    </lineage>
</organism>
<sequence length="318" mass="34283">MTSIVFMGTPQFSVPILEALVANDYQILAVVTQPDRKVGRKQVLQQTPVKEAAVRLDLPVFQPEKLSGSPELADVIALQPDLIVTAAYGQFLPTKLLEAAKIAAINVHGSLLPKYRGGAPIQYAVLNGDSEIGITIMHMAKKMDAGDMIEQASIPIEATDDTGSLFDKLSYVGRDLLLKTLPGIIAQTAPRTPQDEVQVTFAYNITKEQEQLDINQPAEQLLNQIRALRPQPGAWLAVNGQRTKIWQATVAETTTDQAAGVVVALNKKDFELAAGNGTVLKITEIQPAGKAKMPVQSYLNGVGKQLAVGQQVVVQDAE</sequence>